<dbReference type="EC" id="6.1.1.5" evidence="1"/>
<dbReference type="EMBL" id="CP000891">
    <property type="protein sequence ID" value="ABX48332.1"/>
    <property type="molecule type" value="Genomic_DNA"/>
</dbReference>
<dbReference type="RefSeq" id="WP_012196769.1">
    <property type="nucleotide sequence ID" value="NC_009997.1"/>
</dbReference>
<dbReference type="SMR" id="A9L4U7"/>
<dbReference type="GeneID" id="11771436"/>
<dbReference type="KEGG" id="sbn:Sbal195_1156"/>
<dbReference type="HOGENOM" id="CLU_001493_7_1_6"/>
<dbReference type="Proteomes" id="UP000000770">
    <property type="component" value="Chromosome"/>
</dbReference>
<dbReference type="GO" id="GO:0005829">
    <property type="term" value="C:cytosol"/>
    <property type="evidence" value="ECO:0007669"/>
    <property type="project" value="TreeGrafter"/>
</dbReference>
<dbReference type="GO" id="GO:0002161">
    <property type="term" value="F:aminoacyl-tRNA deacylase activity"/>
    <property type="evidence" value="ECO:0007669"/>
    <property type="project" value="InterPro"/>
</dbReference>
<dbReference type="GO" id="GO:0005524">
    <property type="term" value="F:ATP binding"/>
    <property type="evidence" value="ECO:0007669"/>
    <property type="project" value="UniProtKB-UniRule"/>
</dbReference>
<dbReference type="GO" id="GO:0004822">
    <property type="term" value="F:isoleucine-tRNA ligase activity"/>
    <property type="evidence" value="ECO:0007669"/>
    <property type="project" value="UniProtKB-UniRule"/>
</dbReference>
<dbReference type="GO" id="GO:0000049">
    <property type="term" value="F:tRNA binding"/>
    <property type="evidence" value="ECO:0007669"/>
    <property type="project" value="InterPro"/>
</dbReference>
<dbReference type="GO" id="GO:0008270">
    <property type="term" value="F:zinc ion binding"/>
    <property type="evidence" value="ECO:0007669"/>
    <property type="project" value="UniProtKB-UniRule"/>
</dbReference>
<dbReference type="GO" id="GO:0006428">
    <property type="term" value="P:isoleucyl-tRNA aminoacylation"/>
    <property type="evidence" value="ECO:0007669"/>
    <property type="project" value="UniProtKB-UniRule"/>
</dbReference>
<dbReference type="CDD" id="cd07960">
    <property type="entry name" value="Anticodon_Ia_Ile_BEm"/>
    <property type="match status" value="1"/>
</dbReference>
<dbReference type="CDD" id="cd00818">
    <property type="entry name" value="IleRS_core"/>
    <property type="match status" value="1"/>
</dbReference>
<dbReference type="FunFam" id="1.10.730.20:FF:000001">
    <property type="entry name" value="Isoleucine--tRNA ligase"/>
    <property type="match status" value="1"/>
</dbReference>
<dbReference type="FunFam" id="3.40.50.620:FF:000042">
    <property type="entry name" value="Isoleucine--tRNA ligase"/>
    <property type="match status" value="1"/>
</dbReference>
<dbReference type="FunFam" id="3.40.50.620:FF:000048">
    <property type="entry name" value="Isoleucine--tRNA ligase"/>
    <property type="match status" value="1"/>
</dbReference>
<dbReference type="Gene3D" id="1.10.730.20">
    <property type="match status" value="1"/>
</dbReference>
<dbReference type="Gene3D" id="3.40.50.620">
    <property type="entry name" value="HUPs"/>
    <property type="match status" value="2"/>
</dbReference>
<dbReference type="HAMAP" id="MF_02002">
    <property type="entry name" value="Ile_tRNA_synth_type1"/>
    <property type="match status" value="1"/>
</dbReference>
<dbReference type="InterPro" id="IPR001412">
    <property type="entry name" value="aa-tRNA-synth_I_CS"/>
</dbReference>
<dbReference type="InterPro" id="IPR002300">
    <property type="entry name" value="aa-tRNA-synth_Ia"/>
</dbReference>
<dbReference type="InterPro" id="IPR033708">
    <property type="entry name" value="Anticodon_Ile_BEm"/>
</dbReference>
<dbReference type="InterPro" id="IPR002301">
    <property type="entry name" value="Ile-tRNA-ligase"/>
</dbReference>
<dbReference type="InterPro" id="IPR023585">
    <property type="entry name" value="Ile-tRNA-ligase_type1"/>
</dbReference>
<dbReference type="InterPro" id="IPR050081">
    <property type="entry name" value="Ile-tRNA_ligase"/>
</dbReference>
<dbReference type="InterPro" id="IPR013155">
    <property type="entry name" value="M/V/L/I-tRNA-synth_anticd-bd"/>
</dbReference>
<dbReference type="InterPro" id="IPR014729">
    <property type="entry name" value="Rossmann-like_a/b/a_fold"/>
</dbReference>
<dbReference type="InterPro" id="IPR009080">
    <property type="entry name" value="tRNAsynth_Ia_anticodon-bd"/>
</dbReference>
<dbReference type="InterPro" id="IPR009008">
    <property type="entry name" value="Val/Leu/Ile-tRNA-synth_edit"/>
</dbReference>
<dbReference type="InterPro" id="IPR010663">
    <property type="entry name" value="Znf_FPG/IleRS"/>
</dbReference>
<dbReference type="NCBIfam" id="TIGR00392">
    <property type="entry name" value="ileS"/>
    <property type="match status" value="1"/>
</dbReference>
<dbReference type="PANTHER" id="PTHR42765:SF1">
    <property type="entry name" value="ISOLEUCINE--TRNA LIGASE, MITOCHONDRIAL"/>
    <property type="match status" value="1"/>
</dbReference>
<dbReference type="PANTHER" id="PTHR42765">
    <property type="entry name" value="SOLEUCYL-TRNA SYNTHETASE"/>
    <property type="match status" value="1"/>
</dbReference>
<dbReference type="Pfam" id="PF08264">
    <property type="entry name" value="Anticodon_1"/>
    <property type="match status" value="1"/>
</dbReference>
<dbReference type="Pfam" id="PF00133">
    <property type="entry name" value="tRNA-synt_1"/>
    <property type="match status" value="1"/>
</dbReference>
<dbReference type="Pfam" id="PF06827">
    <property type="entry name" value="zf-FPG_IleRS"/>
    <property type="match status" value="1"/>
</dbReference>
<dbReference type="PRINTS" id="PR00984">
    <property type="entry name" value="TRNASYNTHILE"/>
</dbReference>
<dbReference type="SUPFAM" id="SSF47323">
    <property type="entry name" value="Anticodon-binding domain of a subclass of class I aminoacyl-tRNA synthetases"/>
    <property type="match status" value="1"/>
</dbReference>
<dbReference type="SUPFAM" id="SSF52374">
    <property type="entry name" value="Nucleotidylyl transferase"/>
    <property type="match status" value="1"/>
</dbReference>
<dbReference type="SUPFAM" id="SSF50677">
    <property type="entry name" value="ValRS/IleRS/LeuRS editing domain"/>
    <property type="match status" value="1"/>
</dbReference>
<dbReference type="PROSITE" id="PS00178">
    <property type="entry name" value="AA_TRNA_LIGASE_I"/>
    <property type="match status" value="1"/>
</dbReference>
<feature type="chain" id="PRO_1000088553" description="Isoleucine--tRNA ligase">
    <location>
        <begin position="1"/>
        <end position="940"/>
    </location>
</feature>
<feature type="short sequence motif" description="'HIGH' region">
    <location>
        <begin position="58"/>
        <end position="68"/>
    </location>
</feature>
<feature type="short sequence motif" description="'KMSKS' region">
    <location>
        <begin position="605"/>
        <end position="609"/>
    </location>
</feature>
<feature type="binding site" evidence="1">
    <location>
        <position position="564"/>
    </location>
    <ligand>
        <name>L-isoleucyl-5'-AMP</name>
        <dbReference type="ChEBI" id="CHEBI:178002"/>
    </ligand>
</feature>
<feature type="binding site" evidence="1">
    <location>
        <position position="608"/>
    </location>
    <ligand>
        <name>ATP</name>
        <dbReference type="ChEBI" id="CHEBI:30616"/>
    </ligand>
</feature>
<feature type="binding site" evidence="1">
    <location>
        <position position="903"/>
    </location>
    <ligand>
        <name>Zn(2+)</name>
        <dbReference type="ChEBI" id="CHEBI:29105"/>
    </ligand>
</feature>
<feature type="binding site" evidence="1">
    <location>
        <position position="906"/>
    </location>
    <ligand>
        <name>Zn(2+)</name>
        <dbReference type="ChEBI" id="CHEBI:29105"/>
    </ligand>
</feature>
<feature type="binding site" evidence="1">
    <location>
        <position position="923"/>
    </location>
    <ligand>
        <name>Zn(2+)</name>
        <dbReference type="ChEBI" id="CHEBI:29105"/>
    </ligand>
</feature>
<feature type="binding site" evidence="1">
    <location>
        <position position="926"/>
    </location>
    <ligand>
        <name>Zn(2+)</name>
        <dbReference type="ChEBI" id="CHEBI:29105"/>
    </ligand>
</feature>
<sequence length="940" mass="105764">MSDYKFTLNLPETEFPMRGNLANREPEMLERWTKDGLYQQIRDSRIGRTPFILHDGPPYANGSIHIGHSVNKILKDIIIKSKTMSGFDAPYVPGWDCHGLPIELKVEQKVGKPGQKISAAEFREECRKYAAEQVNGQREDFIRLGVLGDWQNPYLTMDFSTEANIVRSLSKVIESGHLHKGVKPVHWCTDCGSALAEAEVEYEDKTSPAIDVAFVAADSKAVAAKFGVSDYSHPVSMVIWTTTPWTLPANRALSLSPELDYSLVEFEKDGVTQALILAEVLVESCLTRYNVESHTVLGSAKGAAFELVRFNHPFLDFDVPAILGDHVTTDAGTGIVHTAPGHGQDDFVVGQKYGLEVANPVGDNGVYKPDTEYFAGQHVFKANDNVVALLREKSALLNHVAYRHSYPHCWRHKTPIIFRATPQWFISMDNHGLRTQALKEIEQTQWIPDWGQSRIEKMVENRPDWCISRQRTWGVPITLFVNRETEELHPDSVSLMERVACRIEQQGIQAWWDLDAAELLGDEAEQYRKVTDTLDVWFDSGSTFSSVVAARPEFHGHGVDLYLEGSDQHRGWFMSSLMISTAMNGKAPYKQVLTHGFTVDGKGRKMSKSIGNVIAPQTVTNKLGADILRLWVAATDYSGEMTVSDEILNRSADAYRRIRNTARFLLANLNGFEPAKDLVAVEDMVALDRWVVRRAAALQQEIIEAYEQYNFHIVTQKLMQFCSVELGSFYLDIIKDRQYTAKQEGHARRSCQSALYLISEAMVRWIAPILSFTADEVWQLLPGERDAYVFTQEWYQGLKSVTLATDLSDDYWQQLLTVRNEVNKVIEQARRDKRIGGSLEAEVTLFADAALTEQLTHIGDELRFVLLTSEAKVLPLADATSEAVETELASLKLVVASSTAEKCERCWHHREEVGTIEAHPTLCTRCVTNIEGDGEVRLFA</sequence>
<evidence type="ECO:0000255" key="1">
    <source>
        <dbReference type="HAMAP-Rule" id="MF_02002"/>
    </source>
</evidence>
<protein>
    <recommendedName>
        <fullName evidence="1">Isoleucine--tRNA ligase</fullName>
        <ecNumber evidence="1">6.1.1.5</ecNumber>
    </recommendedName>
    <alternativeName>
        <fullName evidence="1">Isoleucyl-tRNA synthetase</fullName>
        <shortName evidence="1">IleRS</shortName>
    </alternativeName>
</protein>
<accession>A9L4U7</accession>
<reference key="1">
    <citation type="submission" date="2007-11" db="EMBL/GenBank/DDBJ databases">
        <title>Complete sequence of chromosome of Shewanella baltica OS195.</title>
        <authorList>
            <consortium name="US DOE Joint Genome Institute"/>
            <person name="Copeland A."/>
            <person name="Lucas S."/>
            <person name="Lapidus A."/>
            <person name="Barry K."/>
            <person name="Glavina del Rio T."/>
            <person name="Dalin E."/>
            <person name="Tice H."/>
            <person name="Pitluck S."/>
            <person name="Chain P."/>
            <person name="Malfatti S."/>
            <person name="Shin M."/>
            <person name="Vergez L."/>
            <person name="Schmutz J."/>
            <person name="Larimer F."/>
            <person name="Land M."/>
            <person name="Hauser L."/>
            <person name="Kyrpides N."/>
            <person name="Kim E."/>
            <person name="Brettar I."/>
            <person name="Rodrigues J."/>
            <person name="Konstantinidis K."/>
            <person name="Klappenbach J."/>
            <person name="Hofle M."/>
            <person name="Tiedje J."/>
            <person name="Richardson P."/>
        </authorList>
    </citation>
    <scope>NUCLEOTIDE SEQUENCE [LARGE SCALE GENOMIC DNA]</scope>
    <source>
        <strain>OS195</strain>
    </source>
</reference>
<organism>
    <name type="scientific">Shewanella baltica (strain OS195)</name>
    <dbReference type="NCBI Taxonomy" id="399599"/>
    <lineage>
        <taxon>Bacteria</taxon>
        <taxon>Pseudomonadati</taxon>
        <taxon>Pseudomonadota</taxon>
        <taxon>Gammaproteobacteria</taxon>
        <taxon>Alteromonadales</taxon>
        <taxon>Shewanellaceae</taxon>
        <taxon>Shewanella</taxon>
    </lineage>
</organism>
<comment type="function">
    <text evidence="1">Catalyzes the attachment of isoleucine to tRNA(Ile). As IleRS can inadvertently accommodate and process structurally similar amino acids such as valine, to avoid such errors it has two additional distinct tRNA(Ile)-dependent editing activities. One activity is designated as 'pretransfer' editing and involves the hydrolysis of activated Val-AMP. The other activity is designated 'posttransfer' editing and involves deacylation of mischarged Val-tRNA(Ile).</text>
</comment>
<comment type="catalytic activity">
    <reaction evidence="1">
        <text>tRNA(Ile) + L-isoleucine + ATP = L-isoleucyl-tRNA(Ile) + AMP + diphosphate</text>
        <dbReference type="Rhea" id="RHEA:11060"/>
        <dbReference type="Rhea" id="RHEA-COMP:9666"/>
        <dbReference type="Rhea" id="RHEA-COMP:9695"/>
        <dbReference type="ChEBI" id="CHEBI:30616"/>
        <dbReference type="ChEBI" id="CHEBI:33019"/>
        <dbReference type="ChEBI" id="CHEBI:58045"/>
        <dbReference type="ChEBI" id="CHEBI:78442"/>
        <dbReference type="ChEBI" id="CHEBI:78528"/>
        <dbReference type="ChEBI" id="CHEBI:456215"/>
        <dbReference type="EC" id="6.1.1.5"/>
    </reaction>
</comment>
<comment type="cofactor">
    <cofactor evidence="1">
        <name>Zn(2+)</name>
        <dbReference type="ChEBI" id="CHEBI:29105"/>
    </cofactor>
    <text evidence="1">Binds 1 zinc ion per subunit.</text>
</comment>
<comment type="subunit">
    <text evidence="1">Monomer.</text>
</comment>
<comment type="subcellular location">
    <subcellularLocation>
        <location evidence="1">Cytoplasm</location>
    </subcellularLocation>
</comment>
<comment type="domain">
    <text evidence="1">IleRS has two distinct active sites: one for aminoacylation and one for editing. The misactivated valine is translocated from the active site to the editing site, which sterically excludes the correctly activated isoleucine. The single editing site contains two valyl binding pockets, one specific for each substrate (Val-AMP or Val-tRNA(Ile)).</text>
</comment>
<comment type="similarity">
    <text evidence="1">Belongs to the class-I aminoacyl-tRNA synthetase family. IleS type 1 subfamily.</text>
</comment>
<proteinExistence type="inferred from homology"/>
<gene>
    <name evidence="1" type="primary">ileS</name>
    <name type="ordered locus">Sbal195_1156</name>
</gene>
<keyword id="KW-0030">Aminoacyl-tRNA synthetase</keyword>
<keyword id="KW-0067">ATP-binding</keyword>
<keyword id="KW-0963">Cytoplasm</keyword>
<keyword id="KW-0436">Ligase</keyword>
<keyword id="KW-0479">Metal-binding</keyword>
<keyword id="KW-0547">Nucleotide-binding</keyword>
<keyword id="KW-0648">Protein biosynthesis</keyword>
<keyword id="KW-0862">Zinc</keyword>
<name>SYI_SHEB9</name>